<protein>
    <recommendedName>
        <fullName evidence="11">GATOR2 complex protein Mio</fullName>
    </recommendedName>
    <alternativeName>
        <fullName evidence="10 13">Protein missing oocyte</fullName>
    </alternativeName>
</protein>
<comment type="function">
    <text evidence="4 5 6 7 8">An essential component of the GATOR subcomplex GATOR2 which functions as an activator of the amino acid-sensing branch of the mTORC1 signaling pathway (PubMed:23723238, PubMed:27166823). The two GATOR subcomplexes, GATOR1 and GATOR2, regulate the mTORC1 pathway in order to mediate metabolic homeostasis, female gametogenesis and the response to amino acid limitation and complete starvation (PubMed:23723238, PubMed:27166823). GATOR2 activates the mTORC1 signaling pathway through the inhibition of the GATOR1 subcomplex, controlling the switch to cell proliferation and growth under nutrient replete conditions and during female oocyte development (PubMed:14973288, PubMed:21521741, PubMed:23723238, PubMed:25512509). This component is required for activating mTORC1 specifically in germline cells to promote cell growth and maintain the oocyte fate (PubMed:21521741, PubMed:23723238, PubMed:27166823). GATOR1 and GATOR2 act at different stages of oogenesis to regulate mTORC1 in order to control meiotic entry and promote oocyte growth and development (PubMed:14973288, PubMed:21521741, PubMed:23723238, PubMed:25512509). After exactly four mitotic cyst divisions, the GATOR1 complex members (Iml1, Nprl2 and Nprl3) down-regulate mTORC1 to slow cellular metabolism and promote the mitotic/meiotic transition (PubMed:25512509). At later stages of oogenesis, the mio and Nup44A components of the GATOR2 complex inhibit GATOR1 and thus activate mTORC1 to promote meiotic progression, and drive oocyte growth and development (PubMed:21521741, PubMed:25512509). In addition to its role in the regulation of the mTORC1 complex, functions independently of mTORC1 to prevent the inappropriate accumulation of autolysosomes in germline tissues (PubMed:27166823).</text>
</comment>
<comment type="subunit">
    <text evidence="5 8 9">Component of the GATOR complex consisting of mio, Nup44A/Seh1, Im11, Nplr3, Nplr2, Wdr24, Wdr59 and Sec13 (PubMed:27166823). Within the GATOR complex, probable component of the GATOR2 subcomplex which is likely composed of mio, Nup44A/Seh1, Wdr24, Wdr59 and Sec13 (PubMed:27166823). Interacts with Wdr24 (PubMed:27166823). Interacts with nucleoporin Nup44A/Seh1 (PubMed:21521741). The GATOR2 complex associates with unmet in the absence of S-adenosyl-L-methionine; the mio-Wdr24-Nup44A subcomplex is essential and sufficient for this interaction while Wdr59 and Sec13 are dispensable (PubMed:38514639). This association acts as a nutrient sensor to inhibit mTORC1 signaling in the absence of methionine (PubMed:38514639).</text>
</comment>
<comment type="interaction">
    <interactant intactId="EBI-3418826">
        <id>Q9VQ89</id>
    </interactant>
    <interactant intactId="EBI-3407214">
        <id>Q9XZ25</id>
        <label>Wdr24</label>
    </interactant>
    <organismsDiffer>false</organismsDiffer>
    <experiments>2</experiments>
</comment>
<comment type="subcellular location">
    <subcellularLocation>
        <location evidence="4">Nucleus</location>
    </subcellularLocation>
    <subcellularLocation>
        <location evidence="7">Lysosome</location>
    </subcellularLocation>
    <text evidence="4 7">Accumulates in pro-oocyte nuclei in early prophase of meiosis I (PubMed:14973288). In egg chambers, detected in lysosomes and autolysosomes of both fed and starved females (PubMed:25512509).</text>
</comment>
<comment type="tissue specificity">
    <text evidence="4">Present in the oocyte.</text>
</comment>
<comment type="domain">
    <text evidence="9">The WD repeats are important for recruitment of the methionine nutrient sensor unmet.</text>
</comment>
<comment type="disruption phenotype">
    <text evidence="4">Egg chambers contain 16 polyploid nurse cells because the oocyte enters the endocycle and develops as a polyploid nurse cell.</text>
</comment>
<comment type="miscellaneous">
    <text evidence="12">This protein rapidly evolved the ability to recruit the methyltransferase unmet at an evolutionary branch point between honeybees and mosquitos, corresponding to the emergence of the order Diptera. This allowed the GATOR2 complex to repurpose the substrate binding ability of unmet to function as a nutrient sensor for methionine.</text>
</comment>
<comment type="similarity">
    <text evidence="11">Belongs to the WD repeat mio family.</text>
</comment>
<keyword id="KW-0131">Cell cycle</keyword>
<keyword id="KW-0132">Cell division</keyword>
<keyword id="KW-0217">Developmental protein</keyword>
<keyword id="KW-0221">Differentiation</keyword>
<keyword id="KW-0458">Lysosome</keyword>
<keyword id="KW-0469">Meiosis</keyword>
<keyword id="KW-0479">Metal-binding</keyword>
<keyword id="KW-0498">Mitosis</keyword>
<keyword id="KW-0539">Nucleus</keyword>
<keyword id="KW-0896">Oogenesis</keyword>
<keyword id="KW-1185">Reference proteome</keyword>
<keyword id="KW-0677">Repeat</keyword>
<keyword id="KW-0853">WD repeat</keyword>
<keyword id="KW-0862">Zinc</keyword>
<keyword id="KW-0863">Zinc-finger</keyword>
<feature type="chain" id="PRO_0000329410" description="GATOR2 complex protein Mio">
    <location>
        <begin position="1"/>
        <end position="867"/>
    </location>
</feature>
<feature type="repeat" description="WD 1">
    <location>
        <begin position="51"/>
        <end position="86"/>
    </location>
</feature>
<feature type="repeat" description="WD 2" evidence="2">
    <location>
        <begin position="100"/>
        <end position="144"/>
    </location>
</feature>
<feature type="repeat" description="WD 3" evidence="2">
    <location>
        <begin position="149"/>
        <end position="188"/>
    </location>
</feature>
<feature type="repeat" description="WD 4" evidence="2">
    <location>
        <begin position="190"/>
        <end position="228"/>
    </location>
</feature>
<feature type="repeat" description="WD 5" evidence="2">
    <location>
        <begin position="231"/>
        <end position="272"/>
    </location>
</feature>
<feature type="zinc finger region" description="C4-type" evidence="1">
    <location>
        <begin position="739"/>
        <end position="777"/>
    </location>
</feature>
<feature type="zinc finger region" description="RING-type; atypical" evidence="1">
    <location>
        <begin position="778"/>
        <end position="857"/>
    </location>
</feature>
<feature type="region of interest" description="Disordered" evidence="3">
    <location>
        <begin position="350"/>
        <end position="378"/>
    </location>
</feature>
<feature type="compositionally biased region" description="Low complexity" evidence="3">
    <location>
        <begin position="350"/>
        <end position="376"/>
    </location>
</feature>
<feature type="binding site" evidence="1">
    <location>
        <position position="741"/>
    </location>
    <ligand>
        <name>Zn(2+)</name>
        <dbReference type="ChEBI" id="CHEBI:29105"/>
        <label>1</label>
    </ligand>
</feature>
<feature type="binding site" evidence="1">
    <location>
        <position position="744"/>
    </location>
    <ligand>
        <name>Zn(2+)</name>
        <dbReference type="ChEBI" id="CHEBI:29105"/>
        <label>1</label>
    </ligand>
</feature>
<feature type="binding site" evidence="1">
    <location>
        <position position="771"/>
    </location>
    <ligand>
        <name>Zn(2+)</name>
        <dbReference type="ChEBI" id="CHEBI:29105"/>
        <label>1</label>
    </ligand>
</feature>
<feature type="binding site" evidence="1">
    <location>
        <position position="774"/>
    </location>
    <ligand>
        <name>Zn(2+)</name>
        <dbReference type="ChEBI" id="CHEBI:29105"/>
        <label>1</label>
    </ligand>
</feature>
<feature type="binding site" evidence="1">
    <location>
        <position position="784"/>
    </location>
    <ligand>
        <name>Zn(2+)</name>
        <dbReference type="ChEBI" id="CHEBI:29105"/>
        <label>2</label>
    </ligand>
</feature>
<feature type="binding site" evidence="1">
    <location>
        <position position="821"/>
    </location>
    <ligand>
        <name>Zn(2+)</name>
        <dbReference type="ChEBI" id="CHEBI:29105"/>
        <label>3</label>
    </ligand>
</feature>
<feature type="binding site" evidence="1">
    <location>
        <position position="824"/>
    </location>
    <ligand>
        <name>Zn(2+)</name>
        <dbReference type="ChEBI" id="CHEBI:29105"/>
        <label>3</label>
    </ligand>
</feature>
<feature type="binding site" evidence="1">
    <location>
        <position position="824"/>
    </location>
    <ligand>
        <name>Zn(2+)</name>
        <dbReference type="ChEBI" id="CHEBI:29105"/>
        <label>4</label>
    </ligand>
</feature>
<feature type="binding site" evidence="1">
    <location>
        <position position="826"/>
    </location>
    <ligand>
        <name>Zn(2+)</name>
        <dbReference type="ChEBI" id="CHEBI:29105"/>
        <label>4</label>
    </ligand>
</feature>
<feature type="binding site" evidence="1">
    <location>
        <position position="829"/>
    </location>
    <ligand>
        <name>Zn(2+)</name>
        <dbReference type="ChEBI" id="CHEBI:29105"/>
        <label>2</label>
    </ligand>
</feature>
<feature type="binding site" evidence="1">
    <location>
        <position position="832"/>
    </location>
    <ligand>
        <name>Zn(2+)</name>
        <dbReference type="ChEBI" id="CHEBI:29105"/>
        <label>2</label>
    </ligand>
</feature>
<feature type="binding site" evidence="1">
    <location>
        <position position="843"/>
    </location>
    <ligand>
        <name>Zn(2+)</name>
        <dbReference type="ChEBI" id="CHEBI:29105"/>
        <label>4</label>
    </ligand>
</feature>
<feature type="binding site" evidence="1">
    <location>
        <position position="848"/>
    </location>
    <ligand>
        <name>Zn(2+)</name>
        <dbReference type="ChEBI" id="CHEBI:29105"/>
        <label>4</label>
    </ligand>
</feature>
<feature type="binding site" evidence="1">
    <location>
        <position position="852"/>
    </location>
    <ligand>
        <name>Zn(2+)</name>
        <dbReference type="ChEBI" id="CHEBI:29105"/>
        <label>3</label>
    </ligand>
</feature>
<feature type="mutagenesis site" description="Significant decrease in mTORC1 activity in adult ovaries indicated by reduced phosphorylation of S6K/p70S6K and the accumulation of autolysosomes. Female germline clones are smaller compared to wild-type cells. In contrast, somatic tissues do not display a significant decrease in mTORC1 activity and there is only a negligible decrease in cell size. RNAi-mediated knockdown of Nprl1 or Nprl3 rescues the ovarian defects in mutants, but not the accumulation of lysosomes." evidence="7 8">
    <location>
        <begin position="817"/>
        <end position="867"/>
    </location>
</feature>
<name>MIO_DROME</name>
<evidence type="ECO:0000250" key="1">
    <source>
        <dbReference type="UniProtKB" id="Q9NXC5"/>
    </source>
</evidence>
<evidence type="ECO:0000255" key="2"/>
<evidence type="ECO:0000256" key="3">
    <source>
        <dbReference type="SAM" id="MobiDB-lite"/>
    </source>
</evidence>
<evidence type="ECO:0000269" key="4">
    <source>
    </source>
</evidence>
<evidence type="ECO:0000269" key="5">
    <source>
    </source>
</evidence>
<evidence type="ECO:0000269" key="6">
    <source>
    </source>
</evidence>
<evidence type="ECO:0000269" key="7">
    <source>
    </source>
</evidence>
<evidence type="ECO:0000269" key="8">
    <source>
    </source>
</evidence>
<evidence type="ECO:0000269" key="9">
    <source>
    </source>
</evidence>
<evidence type="ECO:0000303" key="10">
    <source>
    </source>
</evidence>
<evidence type="ECO:0000305" key="11"/>
<evidence type="ECO:0000305" key="12">
    <source>
    </source>
</evidence>
<evidence type="ECO:0000312" key="13">
    <source>
        <dbReference type="FlyBase" id="FBgn0031399"/>
    </source>
</evidence>
<evidence type="ECO:0000312" key="14">
    <source>
        <dbReference type="Proteomes" id="UP000000803"/>
    </source>
</evidence>
<dbReference type="EMBL" id="AE014134">
    <property type="protein sequence ID" value="AAF51288.2"/>
    <property type="molecule type" value="Genomic_DNA"/>
</dbReference>
<dbReference type="EMBL" id="AY061485">
    <property type="protein sequence ID" value="AAL29033.1"/>
    <property type="molecule type" value="mRNA"/>
</dbReference>
<dbReference type="RefSeq" id="NP_608656.1">
    <property type="nucleotide sequence ID" value="NM_134812.3"/>
</dbReference>
<dbReference type="SMR" id="Q9VQ89"/>
<dbReference type="BioGRID" id="59628">
    <property type="interactions" value="10"/>
</dbReference>
<dbReference type="ComplexPortal" id="CPX-2664">
    <property type="entry name" value="GATOR2 complex"/>
</dbReference>
<dbReference type="FunCoup" id="Q9VQ89">
    <property type="interactions" value="1582"/>
</dbReference>
<dbReference type="IntAct" id="Q9VQ89">
    <property type="interactions" value="8"/>
</dbReference>
<dbReference type="STRING" id="7227.FBpp0077507"/>
<dbReference type="PaxDb" id="7227-FBpp0077507"/>
<dbReference type="EnsemblMetazoa" id="FBtr0077835">
    <property type="protein sequence ID" value="FBpp0077507"/>
    <property type="gene ID" value="FBgn0031399"/>
</dbReference>
<dbReference type="GeneID" id="33399"/>
<dbReference type="KEGG" id="dme:Dmel_CG7074"/>
<dbReference type="AGR" id="FB:FBgn0031399"/>
<dbReference type="CTD" id="33399"/>
<dbReference type="FlyBase" id="FBgn0031399">
    <property type="gene designation" value="mio"/>
</dbReference>
<dbReference type="VEuPathDB" id="VectorBase:FBgn0031399"/>
<dbReference type="eggNOG" id="KOG1008">
    <property type="taxonomic scope" value="Eukaryota"/>
</dbReference>
<dbReference type="GeneTree" id="ENSGT00390000015038"/>
<dbReference type="HOGENOM" id="CLU_005843_1_0_1"/>
<dbReference type="InParanoid" id="Q9VQ89"/>
<dbReference type="OMA" id="YWIASYL"/>
<dbReference type="OrthoDB" id="341486at2759"/>
<dbReference type="PhylomeDB" id="Q9VQ89"/>
<dbReference type="BioGRID-ORCS" id="33399">
    <property type="hits" value="0 hits in 1 CRISPR screen"/>
</dbReference>
<dbReference type="ChiTaRS" id="Mondo">
    <property type="organism name" value="fly"/>
</dbReference>
<dbReference type="GenomeRNAi" id="33399"/>
<dbReference type="PRO" id="PR:Q9VQ89"/>
<dbReference type="Proteomes" id="UP000000803">
    <property type="component" value="Chromosome 2L"/>
</dbReference>
<dbReference type="Bgee" id="FBgn0031399">
    <property type="expression patterns" value="Expressed in adult Malpighian tubule (Drosophila) and 70 other cell types or tissues"/>
</dbReference>
<dbReference type="GO" id="GO:0044754">
    <property type="term" value="C:autolysosome"/>
    <property type="evidence" value="ECO:0000314"/>
    <property type="project" value="FlyBase"/>
</dbReference>
<dbReference type="GO" id="GO:0005737">
    <property type="term" value="C:cytoplasm"/>
    <property type="evidence" value="ECO:0000318"/>
    <property type="project" value="GO_Central"/>
</dbReference>
<dbReference type="GO" id="GO:0001674">
    <property type="term" value="C:female germ cell nucleus"/>
    <property type="evidence" value="ECO:0000314"/>
    <property type="project" value="UniProtKB"/>
</dbReference>
<dbReference type="GO" id="GO:0061700">
    <property type="term" value="C:GATOR2 complex"/>
    <property type="evidence" value="ECO:0000314"/>
    <property type="project" value="UniProtKB"/>
</dbReference>
<dbReference type="GO" id="GO:0005764">
    <property type="term" value="C:lysosome"/>
    <property type="evidence" value="ECO:0000314"/>
    <property type="project" value="UniProtKB"/>
</dbReference>
<dbReference type="GO" id="GO:0005634">
    <property type="term" value="C:nucleus"/>
    <property type="evidence" value="ECO:0000314"/>
    <property type="project" value="FlyBase"/>
</dbReference>
<dbReference type="GO" id="GO:0032991">
    <property type="term" value="C:protein-containing complex"/>
    <property type="evidence" value="ECO:0000353"/>
    <property type="project" value="FlyBase"/>
</dbReference>
<dbReference type="GO" id="GO:0035859">
    <property type="term" value="C:Seh1-associated complex"/>
    <property type="evidence" value="ECO:0000314"/>
    <property type="project" value="FlyBase"/>
</dbReference>
<dbReference type="GO" id="GO:0008270">
    <property type="term" value="F:zinc ion binding"/>
    <property type="evidence" value="ECO:0007669"/>
    <property type="project" value="UniProtKB-KW"/>
</dbReference>
<dbReference type="GO" id="GO:0051301">
    <property type="term" value="P:cell division"/>
    <property type="evidence" value="ECO:0007669"/>
    <property type="project" value="UniProtKB-KW"/>
</dbReference>
<dbReference type="GO" id="GO:0034198">
    <property type="term" value="P:cellular response to amino acid starvation"/>
    <property type="evidence" value="ECO:0000315"/>
    <property type="project" value="UniProtKB"/>
</dbReference>
<dbReference type="GO" id="GO:0006302">
    <property type="term" value="P:double-strand break repair"/>
    <property type="evidence" value="ECO:0000315"/>
    <property type="project" value="FlyBase"/>
</dbReference>
<dbReference type="GO" id="GO:0007293">
    <property type="term" value="P:germarium-derived egg chamber formation"/>
    <property type="evidence" value="ECO:0000315"/>
    <property type="project" value="FlyBase"/>
</dbReference>
<dbReference type="GO" id="GO:0051321">
    <property type="term" value="P:meiotic cell cycle"/>
    <property type="evidence" value="ECO:0007669"/>
    <property type="project" value="UniProtKB-KW"/>
</dbReference>
<dbReference type="GO" id="GO:0010507">
    <property type="term" value="P:negative regulation of autophagy"/>
    <property type="evidence" value="ECO:0000315"/>
    <property type="project" value="FlyBase"/>
</dbReference>
<dbReference type="GO" id="GO:0009994">
    <property type="term" value="P:oocyte differentiation"/>
    <property type="evidence" value="ECO:0000315"/>
    <property type="project" value="UniProtKB"/>
</dbReference>
<dbReference type="GO" id="GO:0030716">
    <property type="term" value="P:oocyte fate determination"/>
    <property type="evidence" value="ECO:0000315"/>
    <property type="project" value="FlyBase"/>
</dbReference>
<dbReference type="GO" id="GO:0010508">
    <property type="term" value="P:positive regulation of autophagy"/>
    <property type="evidence" value="ECO:0000315"/>
    <property type="project" value="UniProtKB"/>
</dbReference>
<dbReference type="GO" id="GO:0045793">
    <property type="term" value="P:positive regulation of cell size"/>
    <property type="evidence" value="ECO:0000315"/>
    <property type="project" value="UniProtKB"/>
</dbReference>
<dbReference type="GO" id="GO:0032008">
    <property type="term" value="P:positive regulation of TOR signaling"/>
    <property type="evidence" value="ECO:0000315"/>
    <property type="project" value="UniProtKB"/>
</dbReference>
<dbReference type="GO" id="GO:1904263">
    <property type="term" value="P:positive regulation of TORC1 signaling"/>
    <property type="evidence" value="ECO:0000315"/>
    <property type="project" value="FlyBase"/>
</dbReference>
<dbReference type="GO" id="GO:0040020">
    <property type="term" value="P:regulation of meiotic nuclear division"/>
    <property type="evidence" value="ECO:0000315"/>
    <property type="project" value="FlyBase"/>
</dbReference>
<dbReference type="CDD" id="cd16691">
    <property type="entry name" value="mRING-H2-C3H3C2_Mio"/>
    <property type="match status" value="1"/>
</dbReference>
<dbReference type="FunFam" id="2.130.10.10:FF:001086">
    <property type="entry name" value="GATOR complex protein MIOS"/>
    <property type="match status" value="1"/>
</dbReference>
<dbReference type="Gene3D" id="2.130.10.10">
    <property type="entry name" value="YVTN repeat-like/Quinoprotein amine dehydrogenase"/>
    <property type="match status" value="1"/>
</dbReference>
<dbReference type="InterPro" id="IPR037593">
    <property type="entry name" value="MIOS/Sea4"/>
</dbReference>
<dbReference type="InterPro" id="IPR049092">
    <property type="entry name" value="MIOS_a-sol"/>
</dbReference>
<dbReference type="InterPro" id="IPR015943">
    <property type="entry name" value="WD40/YVTN_repeat-like_dom_sf"/>
</dbReference>
<dbReference type="InterPro" id="IPR036322">
    <property type="entry name" value="WD40_repeat_dom_sf"/>
</dbReference>
<dbReference type="InterPro" id="IPR001680">
    <property type="entry name" value="WD40_rpt"/>
</dbReference>
<dbReference type="InterPro" id="IPR031488">
    <property type="entry name" value="Zn_ribbon_mio"/>
</dbReference>
<dbReference type="PANTHER" id="PTHR16453:SF9">
    <property type="entry name" value="GATOR COMPLEX PROTEIN MIOS"/>
    <property type="match status" value="1"/>
</dbReference>
<dbReference type="PANTHER" id="PTHR16453">
    <property type="entry name" value="WD40 DOMAIN-CONTAINING PROTEIN MIO FAMILY MEMBER"/>
    <property type="match status" value="1"/>
</dbReference>
<dbReference type="Pfam" id="PF21719">
    <property type="entry name" value="MIOS_a-sol"/>
    <property type="match status" value="1"/>
</dbReference>
<dbReference type="Pfam" id="PF21720">
    <property type="entry name" value="MIOS_WD40"/>
    <property type="match status" value="2"/>
</dbReference>
<dbReference type="Pfam" id="PF17034">
    <property type="entry name" value="zinc_ribbon_16"/>
    <property type="match status" value="1"/>
</dbReference>
<dbReference type="SMART" id="SM00320">
    <property type="entry name" value="WD40"/>
    <property type="match status" value="5"/>
</dbReference>
<dbReference type="SUPFAM" id="SSF50978">
    <property type="entry name" value="WD40 repeat-like"/>
    <property type="match status" value="1"/>
</dbReference>
<reference key="1">
    <citation type="journal article" date="2000" name="Science">
        <title>The genome sequence of Drosophila melanogaster.</title>
        <authorList>
            <person name="Adams M.D."/>
            <person name="Celniker S.E."/>
            <person name="Holt R.A."/>
            <person name="Evans C.A."/>
            <person name="Gocayne J.D."/>
            <person name="Amanatides P.G."/>
            <person name="Scherer S.E."/>
            <person name="Li P.W."/>
            <person name="Hoskins R.A."/>
            <person name="Galle R.F."/>
            <person name="George R.A."/>
            <person name="Lewis S.E."/>
            <person name="Richards S."/>
            <person name="Ashburner M."/>
            <person name="Henderson S.N."/>
            <person name="Sutton G.G."/>
            <person name="Wortman J.R."/>
            <person name="Yandell M.D."/>
            <person name="Zhang Q."/>
            <person name="Chen L.X."/>
            <person name="Brandon R.C."/>
            <person name="Rogers Y.-H.C."/>
            <person name="Blazej R.G."/>
            <person name="Champe M."/>
            <person name="Pfeiffer B.D."/>
            <person name="Wan K.H."/>
            <person name="Doyle C."/>
            <person name="Baxter E.G."/>
            <person name="Helt G."/>
            <person name="Nelson C.R."/>
            <person name="Miklos G.L.G."/>
            <person name="Abril J.F."/>
            <person name="Agbayani A."/>
            <person name="An H.-J."/>
            <person name="Andrews-Pfannkoch C."/>
            <person name="Baldwin D."/>
            <person name="Ballew R.M."/>
            <person name="Basu A."/>
            <person name="Baxendale J."/>
            <person name="Bayraktaroglu L."/>
            <person name="Beasley E.M."/>
            <person name="Beeson K.Y."/>
            <person name="Benos P.V."/>
            <person name="Berman B.P."/>
            <person name="Bhandari D."/>
            <person name="Bolshakov S."/>
            <person name="Borkova D."/>
            <person name="Botchan M.R."/>
            <person name="Bouck J."/>
            <person name="Brokstein P."/>
            <person name="Brottier P."/>
            <person name="Burtis K.C."/>
            <person name="Busam D.A."/>
            <person name="Butler H."/>
            <person name="Cadieu E."/>
            <person name="Center A."/>
            <person name="Chandra I."/>
            <person name="Cherry J.M."/>
            <person name="Cawley S."/>
            <person name="Dahlke C."/>
            <person name="Davenport L.B."/>
            <person name="Davies P."/>
            <person name="de Pablos B."/>
            <person name="Delcher A."/>
            <person name="Deng Z."/>
            <person name="Mays A.D."/>
            <person name="Dew I."/>
            <person name="Dietz S.M."/>
            <person name="Dodson K."/>
            <person name="Doup L.E."/>
            <person name="Downes M."/>
            <person name="Dugan-Rocha S."/>
            <person name="Dunkov B.C."/>
            <person name="Dunn P."/>
            <person name="Durbin K.J."/>
            <person name="Evangelista C.C."/>
            <person name="Ferraz C."/>
            <person name="Ferriera S."/>
            <person name="Fleischmann W."/>
            <person name="Fosler C."/>
            <person name="Gabrielian A.E."/>
            <person name="Garg N.S."/>
            <person name="Gelbart W.M."/>
            <person name="Glasser K."/>
            <person name="Glodek A."/>
            <person name="Gong F."/>
            <person name="Gorrell J.H."/>
            <person name="Gu Z."/>
            <person name="Guan P."/>
            <person name="Harris M."/>
            <person name="Harris N.L."/>
            <person name="Harvey D.A."/>
            <person name="Heiman T.J."/>
            <person name="Hernandez J.R."/>
            <person name="Houck J."/>
            <person name="Hostin D."/>
            <person name="Houston K.A."/>
            <person name="Howland T.J."/>
            <person name="Wei M.-H."/>
            <person name="Ibegwam C."/>
            <person name="Jalali M."/>
            <person name="Kalush F."/>
            <person name="Karpen G.H."/>
            <person name="Ke Z."/>
            <person name="Kennison J.A."/>
            <person name="Ketchum K.A."/>
            <person name="Kimmel B.E."/>
            <person name="Kodira C.D."/>
            <person name="Kraft C.L."/>
            <person name="Kravitz S."/>
            <person name="Kulp D."/>
            <person name="Lai Z."/>
            <person name="Lasko P."/>
            <person name="Lei Y."/>
            <person name="Levitsky A.A."/>
            <person name="Li J.H."/>
            <person name="Li Z."/>
            <person name="Liang Y."/>
            <person name="Lin X."/>
            <person name="Liu X."/>
            <person name="Mattei B."/>
            <person name="McIntosh T.C."/>
            <person name="McLeod M.P."/>
            <person name="McPherson D."/>
            <person name="Merkulov G."/>
            <person name="Milshina N.V."/>
            <person name="Mobarry C."/>
            <person name="Morris J."/>
            <person name="Moshrefi A."/>
            <person name="Mount S.M."/>
            <person name="Moy M."/>
            <person name="Murphy B."/>
            <person name="Murphy L."/>
            <person name="Muzny D.M."/>
            <person name="Nelson D.L."/>
            <person name="Nelson D.R."/>
            <person name="Nelson K.A."/>
            <person name="Nixon K."/>
            <person name="Nusskern D.R."/>
            <person name="Pacleb J.M."/>
            <person name="Palazzolo M."/>
            <person name="Pittman G.S."/>
            <person name="Pan S."/>
            <person name="Pollard J."/>
            <person name="Puri V."/>
            <person name="Reese M.G."/>
            <person name="Reinert K."/>
            <person name="Remington K."/>
            <person name="Saunders R.D.C."/>
            <person name="Scheeler F."/>
            <person name="Shen H."/>
            <person name="Shue B.C."/>
            <person name="Siden-Kiamos I."/>
            <person name="Simpson M."/>
            <person name="Skupski M.P."/>
            <person name="Smith T.J."/>
            <person name="Spier E."/>
            <person name="Spradling A.C."/>
            <person name="Stapleton M."/>
            <person name="Strong R."/>
            <person name="Sun E."/>
            <person name="Svirskas R."/>
            <person name="Tector C."/>
            <person name="Turner R."/>
            <person name="Venter E."/>
            <person name="Wang A.H."/>
            <person name="Wang X."/>
            <person name="Wang Z.-Y."/>
            <person name="Wassarman D.A."/>
            <person name="Weinstock G.M."/>
            <person name="Weissenbach J."/>
            <person name="Williams S.M."/>
            <person name="Woodage T."/>
            <person name="Worley K.C."/>
            <person name="Wu D."/>
            <person name="Yang S."/>
            <person name="Yao Q.A."/>
            <person name="Ye J."/>
            <person name="Yeh R.-F."/>
            <person name="Zaveri J.S."/>
            <person name="Zhan M."/>
            <person name="Zhang G."/>
            <person name="Zhao Q."/>
            <person name="Zheng L."/>
            <person name="Zheng X.H."/>
            <person name="Zhong F.N."/>
            <person name="Zhong W."/>
            <person name="Zhou X."/>
            <person name="Zhu S.C."/>
            <person name="Zhu X."/>
            <person name="Smith H.O."/>
            <person name="Gibbs R.A."/>
            <person name="Myers E.W."/>
            <person name="Rubin G.M."/>
            <person name="Venter J.C."/>
        </authorList>
    </citation>
    <scope>NUCLEOTIDE SEQUENCE [LARGE SCALE GENOMIC DNA]</scope>
    <source>
        <strain>Berkeley</strain>
    </source>
</reference>
<reference key="2">
    <citation type="journal article" date="2002" name="Genome Biol.">
        <title>Annotation of the Drosophila melanogaster euchromatic genome: a systematic review.</title>
        <authorList>
            <person name="Misra S."/>
            <person name="Crosby M.A."/>
            <person name="Mungall C.J."/>
            <person name="Matthews B.B."/>
            <person name="Campbell K.S."/>
            <person name="Hradecky P."/>
            <person name="Huang Y."/>
            <person name="Kaminker J.S."/>
            <person name="Millburn G.H."/>
            <person name="Prochnik S.E."/>
            <person name="Smith C.D."/>
            <person name="Tupy J.L."/>
            <person name="Whitfield E.J."/>
            <person name="Bayraktaroglu L."/>
            <person name="Berman B.P."/>
            <person name="Bettencourt B.R."/>
            <person name="Celniker S.E."/>
            <person name="de Grey A.D.N.J."/>
            <person name="Drysdale R.A."/>
            <person name="Harris N.L."/>
            <person name="Richter J."/>
            <person name="Russo S."/>
            <person name="Schroeder A.J."/>
            <person name="Shu S.Q."/>
            <person name="Stapleton M."/>
            <person name="Yamada C."/>
            <person name="Ashburner M."/>
            <person name="Gelbart W.M."/>
            <person name="Rubin G.M."/>
            <person name="Lewis S.E."/>
        </authorList>
    </citation>
    <scope>GENOME REANNOTATION</scope>
    <source>
        <strain>Berkeley</strain>
    </source>
</reference>
<reference key="3">
    <citation type="journal article" date="2002" name="Genome Biol.">
        <title>A Drosophila full-length cDNA resource.</title>
        <authorList>
            <person name="Stapleton M."/>
            <person name="Carlson J.W."/>
            <person name="Brokstein P."/>
            <person name="Yu C."/>
            <person name="Champe M."/>
            <person name="George R.A."/>
            <person name="Guarin H."/>
            <person name="Kronmiller B."/>
            <person name="Pacleb J.M."/>
            <person name="Park S."/>
            <person name="Wan K.H."/>
            <person name="Rubin G.M."/>
            <person name="Celniker S.E."/>
        </authorList>
    </citation>
    <scope>NUCLEOTIDE SEQUENCE [LARGE SCALE MRNA]</scope>
    <source>
        <strain>Berkeley</strain>
        <tissue>Embryo</tissue>
    </source>
</reference>
<reference key="4">
    <citation type="journal article" date="2004" name="Development">
        <title>missing oocyte encodes a highly conserved nuclear protein required for the maintenance of the meiotic cycle and oocyte identity in Drosophila.</title>
        <authorList>
            <person name="Iida T."/>
            <person name="Lilly M.A."/>
        </authorList>
    </citation>
    <scope>FUNCTION</scope>
    <scope>SUBCELLULAR LOCATION</scope>
    <scope>TISSUE SPECIFICITY</scope>
    <scope>DISRUPTION PHENOTYPE</scope>
</reference>
<reference key="5">
    <citation type="journal article" date="2011" name="Development">
        <title>The nucleoporin Seh1 forms a complex with Mio and serves an essential tissue-specific function in Drosophila oogenesis.</title>
        <authorList>
            <person name="Senger S."/>
            <person name="Csokmay J."/>
            <person name="Akbar T."/>
            <person name="Tanveer A."/>
            <person name="Jones T.I."/>
            <person name="Sengupta P."/>
            <person name="Lilly M.A."/>
        </authorList>
    </citation>
    <scope>FUNCTION</scope>
    <scope>INTERACTION WITH NUP44A</scope>
</reference>
<reference key="6">
    <citation type="journal article" date="2011" name="Development">
        <title>The nucleoporin Seh1 forms a complex with Mio and serves an essential tissue-specific function in Drosophila oogenesis.</title>
        <authorList>
            <person name="Senger S."/>
            <person name="Csokmay J."/>
            <person name="Akbar T."/>
            <person name="Tanveer A."/>
            <person name="Jones T.I."/>
            <person name="Sengupta P."/>
            <person name="Lilly M.A."/>
        </authorList>
    </citation>
    <scope>ERRATUM OF PUBMED:21521741</scope>
</reference>
<reference key="7">
    <citation type="journal article" date="2013" name="Science">
        <title>A Tumor suppressor complex with GAP activity for the Rag GTPases that signal amino acid sufficiency to mTORC1.</title>
        <authorList>
            <person name="Bar-Peled L."/>
            <person name="Chantranupong L."/>
            <person name="Cherniack A.D."/>
            <person name="Chen W.W."/>
            <person name="Ottina K.A."/>
            <person name="Grabiner B.C."/>
            <person name="Spear E.D."/>
            <person name="Carter S.L."/>
            <person name="Meyerson M."/>
            <person name="Sabatini D.M."/>
        </authorList>
    </citation>
    <scope>FUNCTION</scope>
</reference>
<reference key="8">
    <citation type="journal article" date="2014" name="Proc. Natl. Acad. Sci. U.S.A.">
        <title>TORC1 regulators Iml1/GATOR1 and GATOR2 control meiotic entry and oocyte development in Drosophila.</title>
        <authorList>
            <person name="Wei Y."/>
            <person name="Reveal B."/>
            <person name="Reich J."/>
            <person name="Laursen W.J."/>
            <person name="Senger S."/>
            <person name="Akbar T."/>
            <person name="Iida-Jones T."/>
            <person name="Cai W."/>
            <person name="Jarnik M."/>
            <person name="Lilly M.A."/>
        </authorList>
    </citation>
    <scope>FUNCTION</scope>
    <scope>SUBCELLULAR LOCATION</scope>
    <scope>MUTAGENESIS OF 817-TRP--SER-867</scope>
</reference>
<reference key="9">
    <citation type="journal article" date="2016" name="PLoS Genet.">
        <title>The GATOR2 component Wdr24 regulates TORC1 activity and lysosome function.</title>
        <authorList>
            <person name="Cai W."/>
            <person name="Wei Y."/>
            <person name="Jarnik M."/>
            <person name="Reich J."/>
            <person name="Lilly M.A."/>
        </authorList>
    </citation>
    <scope>FUNCTION</scope>
    <scope>IDENTIFICATION IN THE GATOR COMPLEX</scope>
    <scope>INTERACTION WITH WDR24</scope>
    <scope>MUTAGENESIS OF 817-TRP--SER-867</scope>
</reference>
<reference key="10">
    <citation type="journal article" date="2024" name="Nat. Commun.">
        <title>An evolutionary mechanism to assimilate new nutrient sensors into the mTORC1 pathway.</title>
        <authorList>
            <person name="Liu G.Y."/>
            <person name="Jouandin P."/>
            <person name="Bahng R.E."/>
            <person name="Perrimon N."/>
            <person name="Sabatini D.M."/>
        </authorList>
    </citation>
    <scope>INTERACTION WITH UNMET</scope>
    <scope>WD REPEAT DOMAIN</scope>
</reference>
<gene>
    <name evidence="10 13" type="primary">mio</name>
    <name evidence="13" type="ORF">CG7074</name>
</gene>
<sequence length="867" mass="98602">MSGNTHGLSWFPHFPDKFVSWGQEIHLYEVRRKDDHSQKSRLPYISVNYLANESRYQYARCVAASYHSDQPIIAVGLADGKVGICNFRDTYDSSWEYTPRQQRMCTCLAWNELDANILAIGHDRHRNDTCITIWDIERGVPKETANFFGVGESANSICWDRNHRTVIAGMSQKMIKLFDLRQSNATCQSIQTKTVQGLSVSPNGNYLCSYVDSVITLWDPRNIKSPLRQIQSSKNHLQIAWCPTRTSLLSSLQRDSSYITLYDIRSVDTDNSGEIYHVKRQISPFPARYQHSGKFSFVNCLSWHSRDFERALLLADALNILDFRLPATLHTAHSNRRKLPLLMQRPLYTPASPTSTAATPTQQQPTSSCSTNSGSSLDFSTPGGSPFNVDLLKPELFELDLVDETRQRALEDYGIKPDNKRFGELHLTPYLRNVWSTLNNVYSEDRLTGLKATLGINLGHTSEALMASSRIESQVLQWPEGINNSNKLICYRSEQRDLALQLCGWAFEQELDRFIDQLYANKEYSRAAMICVFHLKIFHACNILSSAADNMRDPSMYRITVIALSSFNADRCSSTWRNQRSSANMQIHDPHLRAVFSFLTMEKDNFDAVLKEEGVSLSDRMAFACKYLSETKLADYVAQQIQAAIDGGDLNGLLLTGESQDGIDILQSYMDTSFDVQTVALVAINYFRQELFEDKRIQYWIASYLDHLNSWGLWEKRAELDIKIESIRPSSRSSRTVFLSCNFCGKSVSNALLDEPRPRSTTTSTNRLSSCPSCRKPLPRCSLCLMHMGTMVNMSNGETPTTTPDVPGWQTKPFSKWFSWCQTCRHGGHTEHIMQWFKQNSECPVSSCNCRCFDMDGTKPNTLRDIS</sequence>
<accession>Q9VQ89</accession>
<accession>Q95RC2</accession>
<organism evidence="14">
    <name type="scientific">Drosophila melanogaster</name>
    <name type="common">Fruit fly</name>
    <dbReference type="NCBI Taxonomy" id="7227"/>
    <lineage>
        <taxon>Eukaryota</taxon>
        <taxon>Metazoa</taxon>
        <taxon>Ecdysozoa</taxon>
        <taxon>Arthropoda</taxon>
        <taxon>Hexapoda</taxon>
        <taxon>Insecta</taxon>
        <taxon>Pterygota</taxon>
        <taxon>Neoptera</taxon>
        <taxon>Endopterygota</taxon>
        <taxon>Diptera</taxon>
        <taxon>Brachycera</taxon>
        <taxon>Muscomorpha</taxon>
        <taxon>Ephydroidea</taxon>
        <taxon>Drosophilidae</taxon>
        <taxon>Drosophila</taxon>
        <taxon>Sophophora</taxon>
    </lineage>
</organism>
<proteinExistence type="evidence at protein level"/>